<organism>
    <name type="scientific">Bacillus cereus (strain 03BB102)</name>
    <dbReference type="NCBI Taxonomy" id="572264"/>
    <lineage>
        <taxon>Bacteria</taxon>
        <taxon>Bacillati</taxon>
        <taxon>Bacillota</taxon>
        <taxon>Bacilli</taxon>
        <taxon>Bacillales</taxon>
        <taxon>Bacillaceae</taxon>
        <taxon>Bacillus</taxon>
        <taxon>Bacillus cereus group</taxon>
    </lineage>
</organism>
<feature type="chain" id="PRO_1000166650" description="NADH-quinone oxidoreductase subunit B">
    <location>
        <begin position="1"/>
        <end position="172"/>
    </location>
</feature>
<feature type="binding site" evidence="1">
    <location>
        <position position="46"/>
    </location>
    <ligand>
        <name>[4Fe-4S] cluster</name>
        <dbReference type="ChEBI" id="CHEBI:49883"/>
    </ligand>
</feature>
<feature type="binding site" evidence="1">
    <location>
        <position position="47"/>
    </location>
    <ligand>
        <name>[4Fe-4S] cluster</name>
        <dbReference type="ChEBI" id="CHEBI:49883"/>
    </ligand>
</feature>
<feature type="binding site" evidence="1">
    <location>
        <position position="111"/>
    </location>
    <ligand>
        <name>[4Fe-4S] cluster</name>
        <dbReference type="ChEBI" id="CHEBI:49883"/>
    </ligand>
</feature>
<feature type="binding site" evidence="1">
    <location>
        <position position="141"/>
    </location>
    <ligand>
        <name>[4Fe-4S] cluster</name>
        <dbReference type="ChEBI" id="CHEBI:49883"/>
    </ligand>
</feature>
<sequence length="172" mass="19226">MVINFEELHPNERAELERNIFFSTLEQLKGWARSNSLWPMTFGLACCAIEMMGVGSSHYDLDRFGSFFRTSPRQSDVMIVSGTVTKKMAPIVRRLYDQMPEPKWVIAMGSCATAGGPYVNSYAVVKGVDQIVPVDVYIPGCPPNPAALIYGINKLKEKIRYEAKTGKQVTNK</sequence>
<protein>
    <recommendedName>
        <fullName evidence="1">NADH-quinone oxidoreductase subunit B</fullName>
        <ecNumber evidence="1">7.1.1.-</ecNumber>
    </recommendedName>
    <alternativeName>
        <fullName evidence="1">NADH dehydrogenase I subunit B</fullName>
    </alternativeName>
    <alternativeName>
        <fullName evidence="1">NDH-1 subunit B</fullName>
    </alternativeName>
</protein>
<accession>C1F0M2</accession>
<evidence type="ECO:0000255" key="1">
    <source>
        <dbReference type="HAMAP-Rule" id="MF_01356"/>
    </source>
</evidence>
<name>NUOB_BACC3</name>
<reference key="1">
    <citation type="submission" date="2009-02" db="EMBL/GenBank/DDBJ databases">
        <title>Genome sequence of Bacillus cereus 03BB102.</title>
        <authorList>
            <person name="Dodson R.J."/>
            <person name="Jackson P."/>
            <person name="Munk A.C."/>
            <person name="Brettin T."/>
            <person name="Bruce D."/>
            <person name="Detter C."/>
            <person name="Tapia R."/>
            <person name="Han C."/>
            <person name="Sutton G."/>
            <person name="Sims D."/>
        </authorList>
    </citation>
    <scope>NUCLEOTIDE SEQUENCE [LARGE SCALE GENOMIC DNA]</scope>
    <source>
        <strain>03BB102</strain>
    </source>
</reference>
<gene>
    <name evidence="1" type="primary">nuoB</name>
    <name type="ordered locus">BCA_5444</name>
</gene>
<keyword id="KW-0004">4Fe-4S</keyword>
<keyword id="KW-1003">Cell membrane</keyword>
<keyword id="KW-0408">Iron</keyword>
<keyword id="KW-0411">Iron-sulfur</keyword>
<keyword id="KW-0472">Membrane</keyword>
<keyword id="KW-0479">Metal-binding</keyword>
<keyword id="KW-0520">NAD</keyword>
<keyword id="KW-0874">Quinone</keyword>
<keyword id="KW-1278">Translocase</keyword>
<keyword id="KW-0813">Transport</keyword>
<dbReference type="EC" id="7.1.1.-" evidence="1"/>
<dbReference type="EMBL" id="CP001407">
    <property type="protein sequence ID" value="ACO31259.1"/>
    <property type="molecule type" value="Genomic_DNA"/>
</dbReference>
<dbReference type="RefSeq" id="WP_000236331.1">
    <property type="nucleotide sequence ID" value="NZ_CP009318.1"/>
</dbReference>
<dbReference type="SMR" id="C1F0M2"/>
<dbReference type="GeneID" id="92803556"/>
<dbReference type="KEGG" id="bcx:BCA_5444"/>
<dbReference type="PATRIC" id="fig|572264.18.peg.5366"/>
<dbReference type="Proteomes" id="UP000002210">
    <property type="component" value="Chromosome"/>
</dbReference>
<dbReference type="GO" id="GO:0005886">
    <property type="term" value="C:plasma membrane"/>
    <property type="evidence" value="ECO:0007669"/>
    <property type="project" value="UniProtKB-SubCell"/>
</dbReference>
<dbReference type="GO" id="GO:0045271">
    <property type="term" value="C:respiratory chain complex I"/>
    <property type="evidence" value="ECO:0007669"/>
    <property type="project" value="TreeGrafter"/>
</dbReference>
<dbReference type="GO" id="GO:0051539">
    <property type="term" value="F:4 iron, 4 sulfur cluster binding"/>
    <property type="evidence" value="ECO:0007669"/>
    <property type="project" value="UniProtKB-KW"/>
</dbReference>
<dbReference type="GO" id="GO:0005506">
    <property type="term" value="F:iron ion binding"/>
    <property type="evidence" value="ECO:0007669"/>
    <property type="project" value="UniProtKB-UniRule"/>
</dbReference>
<dbReference type="GO" id="GO:0008137">
    <property type="term" value="F:NADH dehydrogenase (ubiquinone) activity"/>
    <property type="evidence" value="ECO:0007669"/>
    <property type="project" value="InterPro"/>
</dbReference>
<dbReference type="GO" id="GO:0050136">
    <property type="term" value="F:NADH:ubiquinone reductase (non-electrogenic) activity"/>
    <property type="evidence" value="ECO:0007669"/>
    <property type="project" value="UniProtKB-UniRule"/>
</dbReference>
<dbReference type="GO" id="GO:0048038">
    <property type="term" value="F:quinone binding"/>
    <property type="evidence" value="ECO:0007669"/>
    <property type="project" value="UniProtKB-KW"/>
</dbReference>
<dbReference type="GO" id="GO:0009060">
    <property type="term" value="P:aerobic respiration"/>
    <property type="evidence" value="ECO:0007669"/>
    <property type="project" value="TreeGrafter"/>
</dbReference>
<dbReference type="GO" id="GO:0015990">
    <property type="term" value="P:electron transport coupled proton transport"/>
    <property type="evidence" value="ECO:0007669"/>
    <property type="project" value="TreeGrafter"/>
</dbReference>
<dbReference type="FunFam" id="3.40.50.12280:FF:000002">
    <property type="entry name" value="NADH-quinone oxidoreductase subunit B"/>
    <property type="match status" value="1"/>
</dbReference>
<dbReference type="Gene3D" id="3.40.50.12280">
    <property type="match status" value="1"/>
</dbReference>
<dbReference type="HAMAP" id="MF_01356">
    <property type="entry name" value="NDH1_NuoB"/>
    <property type="match status" value="1"/>
</dbReference>
<dbReference type="InterPro" id="IPR006137">
    <property type="entry name" value="NADH_UbQ_OxRdtase-like_20kDa"/>
</dbReference>
<dbReference type="InterPro" id="IPR006138">
    <property type="entry name" value="NADH_UQ_OxRdtase_20Kd_su"/>
</dbReference>
<dbReference type="NCBIfam" id="TIGR01957">
    <property type="entry name" value="nuoB_fam"/>
    <property type="match status" value="1"/>
</dbReference>
<dbReference type="NCBIfam" id="NF005012">
    <property type="entry name" value="PRK06411.1"/>
    <property type="match status" value="1"/>
</dbReference>
<dbReference type="PANTHER" id="PTHR11995">
    <property type="entry name" value="NADH DEHYDROGENASE"/>
    <property type="match status" value="1"/>
</dbReference>
<dbReference type="PANTHER" id="PTHR11995:SF14">
    <property type="entry name" value="NADH DEHYDROGENASE [UBIQUINONE] IRON-SULFUR PROTEIN 7, MITOCHONDRIAL"/>
    <property type="match status" value="1"/>
</dbReference>
<dbReference type="Pfam" id="PF01058">
    <property type="entry name" value="Oxidored_q6"/>
    <property type="match status" value="1"/>
</dbReference>
<dbReference type="SUPFAM" id="SSF56770">
    <property type="entry name" value="HydA/Nqo6-like"/>
    <property type="match status" value="1"/>
</dbReference>
<proteinExistence type="inferred from homology"/>
<comment type="function">
    <text evidence="1">NDH-1 shuttles electrons from NADH, via FMN and iron-sulfur (Fe-S) centers, to quinones in the respiratory chain. The immediate electron acceptor for the enzyme in this species is believed to be a menaquinone. Couples the redox reaction to proton translocation (for every two electrons transferred, four hydrogen ions are translocated across the cytoplasmic membrane), and thus conserves the redox energy in a proton gradient.</text>
</comment>
<comment type="catalytic activity">
    <reaction evidence="1">
        <text>a quinone + NADH + 5 H(+)(in) = a quinol + NAD(+) + 4 H(+)(out)</text>
        <dbReference type="Rhea" id="RHEA:57888"/>
        <dbReference type="ChEBI" id="CHEBI:15378"/>
        <dbReference type="ChEBI" id="CHEBI:24646"/>
        <dbReference type="ChEBI" id="CHEBI:57540"/>
        <dbReference type="ChEBI" id="CHEBI:57945"/>
        <dbReference type="ChEBI" id="CHEBI:132124"/>
    </reaction>
</comment>
<comment type="cofactor">
    <cofactor evidence="1">
        <name>[4Fe-4S] cluster</name>
        <dbReference type="ChEBI" id="CHEBI:49883"/>
    </cofactor>
    <text evidence="1">Binds 1 [4Fe-4S] cluster.</text>
</comment>
<comment type="subunit">
    <text evidence="1">NDH-1 is composed of 14 different subunits. Subunits NuoB, C, D, E, F, and G constitute the peripheral sector of the complex.</text>
</comment>
<comment type="subcellular location">
    <subcellularLocation>
        <location evidence="1">Cell membrane</location>
        <topology evidence="1">Peripheral membrane protein</topology>
        <orientation evidence="1">Cytoplasmic side</orientation>
    </subcellularLocation>
</comment>
<comment type="similarity">
    <text evidence="1">Belongs to the complex I 20 kDa subunit family.</text>
</comment>